<comment type="similarity">
    <text evidence="1">Belongs to the eukaryotic ribosomal protein eL30 family.</text>
</comment>
<keyword id="KW-0687">Ribonucleoprotein</keyword>
<keyword id="KW-0689">Ribosomal protein</keyword>
<feature type="chain" id="PRO_1000126033" description="Large ribosomal subunit protein eL30">
    <location>
        <begin position="1"/>
        <end position="101"/>
    </location>
</feature>
<name>RL30E_PYRNV</name>
<sequence length="101" mass="10791">MVDISRELQVALNTGKVIIGFEETKKAVLAGTPKLVILAANAPKWARGDIEYYAKLAGVPVFIFPGSSIELGAAAKRPHKIMALAVLDPGQSEILKVVEHV</sequence>
<gene>
    <name evidence="1" type="primary">rpl30e</name>
    <name type="ordered locus">Tneu_1966</name>
</gene>
<proteinExistence type="inferred from homology"/>
<dbReference type="EMBL" id="CP001014">
    <property type="protein sequence ID" value="ACB40881.1"/>
    <property type="molecule type" value="Genomic_DNA"/>
</dbReference>
<dbReference type="RefSeq" id="WP_012351300.1">
    <property type="nucleotide sequence ID" value="NC_010525.1"/>
</dbReference>
<dbReference type="SMR" id="B1YC27"/>
<dbReference type="STRING" id="444157.Tneu_1966"/>
<dbReference type="GeneID" id="6165064"/>
<dbReference type="KEGG" id="tne:Tneu_1966"/>
<dbReference type="eggNOG" id="arCOG01752">
    <property type="taxonomic scope" value="Archaea"/>
</dbReference>
<dbReference type="HOGENOM" id="CLU_130502_1_0_2"/>
<dbReference type="OrthoDB" id="10759at2157"/>
<dbReference type="Proteomes" id="UP000001694">
    <property type="component" value="Chromosome"/>
</dbReference>
<dbReference type="GO" id="GO:0022625">
    <property type="term" value="C:cytosolic large ribosomal subunit"/>
    <property type="evidence" value="ECO:0007669"/>
    <property type="project" value="InterPro"/>
</dbReference>
<dbReference type="GO" id="GO:0003723">
    <property type="term" value="F:RNA binding"/>
    <property type="evidence" value="ECO:0007669"/>
    <property type="project" value="InterPro"/>
</dbReference>
<dbReference type="GO" id="GO:0003735">
    <property type="term" value="F:structural constituent of ribosome"/>
    <property type="evidence" value="ECO:0007669"/>
    <property type="project" value="InterPro"/>
</dbReference>
<dbReference type="GO" id="GO:0006412">
    <property type="term" value="P:translation"/>
    <property type="evidence" value="ECO:0007669"/>
    <property type="project" value="UniProtKB-UniRule"/>
</dbReference>
<dbReference type="Gene3D" id="3.30.1330.30">
    <property type="match status" value="1"/>
</dbReference>
<dbReference type="HAMAP" id="MF_00481">
    <property type="entry name" value="Ribosomal_eL30"/>
    <property type="match status" value="1"/>
</dbReference>
<dbReference type="InterPro" id="IPR000231">
    <property type="entry name" value="Ribosomal_eL30"/>
</dbReference>
<dbReference type="InterPro" id="IPR039109">
    <property type="entry name" value="Ribosomal_eL30-like"/>
</dbReference>
<dbReference type="InterPro" id="IPR029064">
    <property type="entry name" value="Ribosomal_eL30-like_sf"/>
</dbReference>
<dbReference type="InterPro" id="IPR022991">
    <property type="entry name" value="Ribosomal_eL30_CS"/>
</dbReference>
<dbReference type="InterPro" id="IPR004038">
    <property type="entry name" value="Ribosomal_eL8/eL30/eS12/Gad45"/>
</dbReference>
<dbReference type="NCBIfam" id="NF002172">
    <property type="entry name" value="PRK01018.1"/>
    <property type="match status" value="1"/>
</dbReference>
<dbReference type="PANTHER" id="PTHR11449">
    <property type="entry name" value="RIBOSOMAL PROTEIN L30"/>
    <property type="match status" value="1"/>
</dbReference>
<dbReference type="Pfam" id="PF01248">
    <property type="entry name" value="Ribosomal_L7Ae"/>
    <property type="match status" value="1"/>
</dbReference>
<dbReference type="SUPFAM" id="SSF55315">
    <property type="entry name" value="L30e-like"/>
    <property type="match status" value="1"/>
</dbReference>
<dbReference type="PROSITE" id="PS00993">
    <property type="entry name" value="RIBOSOMAL_L30E_2"/>
    <property type="match status" value="1"/>
</dbReference>
<reference key="1">
    <citation type="submission" date="2008-03" db="EMBL/GenBank/DDBJ databases">
        <title>Complete sequence of Thermoproteus neutrophilus V24Sta.</title>
        <authorList>
            <consortium name="US DOE Joint Genome Institute"/>
            <person name="Copeland A."/>
            <person name="Lucas S."/>
            <person name="Lapidus A."/>
            <person name="Glavina del Rio T."/>
            <person name="Dalin E."/>
            <person name="Tice H."/>
            <person name="Bruce D."/>
            <person name="Goodwin L."/>
            <person name="Pitluck S."/>
            <person name="Sims D."/>
            <person name="Brettin T."/>
            <person name="Detter J.C."/>
            <person name="Han C."/>
            <person name="Kuske C.R."/>
            <person name="Schmutz J."/>
            <person name="Larimer F."/>
            <person name="Land M."/>
            <person name="Hauser L."/>
            <person name="Kyrpides N."/>
            <person name="Mikhailova N."/>
            <person name="Biddle J.F."/>
            <person name="Zhang Z."/>
            <person name="Fitz-Gibbon S.T."/>
            <person name="Lowe T.M."/>
            <person name="Saltikov C."/>
            <person name="House C.H."/>
            <person name="Richardson P."/>
        </authorList>
    </citation>
    <scope>NUCLEOTIDE SEQUENCE [LARGE SCALE GENOMIC DNA]</scope>
    <source>
        <strain>DSM 2338 / JCM 9278 / NBRC 100436 / V24Sta</strain>
    </source>
</reference>
<evidence type="ECO:0000255" key="1">
    <source>
        <dbReference type="HAMAP-Rule" id="MF_00481"/>
    </source>
</evidence>
<evidence type="ECO:0000305" key="2"/>
<organism>
    <name type="scientific">Pyrobaculum neutrophilum (strain DSM 2338 / JCM 9278 / NBRC 100436 / V24Sta)</name>
    <name type="common">Thermoproteus neutrophilus</name>
    <dbReference type="NCBI Taxonomy" id="444157"/>
    <lineage>
        <taxon>Archaea</taxon>
        <taxon>Thermoproteota</taxon>
        <taxon>Thermoprotei</taxon>
        <taxon>Thermoproteales</taxon>
        <taxon>Thermoproteaceae</taxon>
        <taxon>Pyrobaculum</taxon>
    </lineage>
</organism>
<accession>B1YC27</accession>
<protein>
    <recommendedName>
        <fullName evidence="1">Large ribosomal subunit protein eL30</fullName>
    </recommendedName>
    <alternativeName>
        <fullName evidence="2">50S ribosomal protein L30e</fullName>
    </alternativeName>
</protein>